<gene>
    <name evidence="1" type="primary">accD</name>
    <name type="ordered locus">ETA_11730</name>
</gene>
<comment type="function">
    <text evidence="1">Component of the acetyl coenzyme A carboxylase (ACC) complex. Biotin carboxylase (BC) catalyzes the carboxylation of biotin on its carrier protein (BCCP) and then the CO(2) group is transferred by the transcarboxylase to acetyl-CoA to form malonyl-CoA.</text>
</comment>
<comment type="catalytic activity">
    <reaction evidence="1">
        <text>N(6)-carboxybiotinyl-L-lysyl-[protein] + acetyl-CoA = N(6)-biotinyl-L-lysyl-[protein] + malonyl-CoA</text>
        <dbReference type="Rhea" id="RHEA:54728"/>
        <dbReference type="Rhea" id="RHEA-COMP:10505"/>
        <dbReference type="Rhea" id="RHEA-COMP:10506"/>
        <dbReference type="ChEBI" id="CHEBI:57288"/>
        <dbReference type="ChEBI" id="CHEBI:57384"/>
        <dbReference type="ChEBI" id="CHEBI:83144"/>
        <dbReference type="ChEBI" id="CHEBI:83145"/>
        <dbReference type="EC" id="2.1.3.15"/>
    </reaction>
</comment>
<comment type="cofactor">
    <cofactor evidence="1">
        <name>Zn(2+)</name>
        <dbReference type="ChEBI" id="CHEBI:29105"/>
    </cofactor>
    <text evidence="1">Binds 1 zinc ion per subunit.</text>
</comment>
<comment type="pathway">
    <text evidence="1">Lipid metabolism; malonyl-CoA biosynthesis; malonyl-CoA from acetyl-CoA: step 1/1.</text>
</comment>
<comment type="subunit">
    <text evidence="1">Acetyl-CoA carboxylase is a heterohexamer composed of biotin carboxyl carrier protein (AccB), biotin carboxylase (AccC) and two subunits each of ACCase subunit alpha (AccA) and ACCase subunit beta (AccD).</text>
</comment>
<comment type="subcellular location">
    <subcellularLocation>
        <location evidence="1">Cytoplasm</location>
    </subcellularLocation>
</comment>
<comment type="similarity">
    <text evidence="1">Belongs to the AccD/PCCB family.</text>
</comment>
<keyword id="KW-0067">ATP-binding</keyword>
<keyword id="KW-0963">Cytoplasm</keyword>
<keyword id="KW-0275">Fatty acid biosynthesis</keyword>
<keyword id="KW-0276">Fatty acid metabolism</keyword>
<keyword id="KW-0444">Lipid biosynthesis</keyword>
<keyword id="KW-0443">Lipid metabolism</keyword>
<keyword id="KW-0479">Metal-binding</keyword>
<keyword id="KW-0547">Nucleotide-binding</keyword>
<keyword id="KW-1185">Reference proteome</keyword>
<keyword id="KW-0808">Transferase</keyword>
<keyword id="KW-0862">Zinc</keyword>
<keyword id="KW-0863">Zinc-finger</keyword>
<reference key="1">
    <citation type="journal article" date="2008" name="Environ. Microbiol.">
        <title>The genome of Erwinia tasmaniensis strain Et1/99, a non-pathogenic bacterium in the genus Erwinia.</title>
        <authorList>
            <person name="Kube M."/>
            <person name="Migdoll A.M."/>
            <person name="Mueller I."/>
            <person name="Kuhl H."/>
            <person name="Beck A."/>
            <person name="Reinhardt R."/>
            <person name="Geider K."/>
        </authorList>
    </citation>
    <scope>NUCLEOTIDE SEQUENCE [LARGE SCALE GENOMIC DNA]</scope>
    <source>
        <strain>DSM 17950 / CFBP 7177 / CIP 109463 / NCPPB 4357 / Et1/99</strain>
    </source>
</reference>
<protein>
    <recommendedName>
        <fullName evidence="1">Acetyl-coenzyme A carboxylase carboxyl transferase subunit beta</fullName>
        <shortName evidence="1">ACCase subunit beta</shortName>
        <shortName evidence="1">Acetyl-CoA carboxylase carboxyltransferase subunit beta</shortName>
        <ecNumber evidence="1">2.1.3.15</ecNumber>
    </recommendedName>
</protein>
<accession>B2VJ00</accession>
<organism>
    <name type="scientific">Erwinia tasmaniensis (strain DSM 17950 / CFBP 7177 / CIP 109463 / NCPPB 4357 / Et1/99)</name>
    <dbReference type="NCBI Taxonomy" id="465817"/>
    <lineage>
        <taxon>Bacteria</taxon>
        <taxon>Pseudomonadati</taxon>
        <taxon>Pseudomonadota</taxon>
        <taxon>Gammaproteobacteria</taxon>
        <taxon>Enterobacterales</taxon>
        <taxon>Erwiniaceae</taxon>
        <taxon>Erwinia</taxon>
    </lineage>
</organism>
<evidence type="ECO:0000255" key="1">
    <source>
        <dbReference type="HAMAP-Rule" id="MF_01395"/>
    </source>
</evidence>
<evidence type="ECO:0000255" key="2">
    <source>
        <dbReference type="PROSITE-ProRule" id="PRU01136"/>
    </source>
</evidence>
<proteinExistence type="inferred from homology"/>
<sequence length="302" mass="33082">MSWIERILNKSTTTPSRKASIPEGVWTKCDSCGQVLYRAELERNLEVCPKCDHHMRMHGRARLHSVLDEGSLIELGSELEPKDVLKFRDSKKYKDRLSAAQKDTSETDALIVMKGTLHGMPVVAAAFEFSFMGGSMGSVVGARFVRAVEQALADNCPMMCFSASGGARMQEALMSLMQMAKTSAALAKMQERGLPYISVLTDPTMGGVSASFAMLGDLNIAEPKALIGFAGPRVIEQTVREKLPPGFQRSEFLIEKGAIDMIVRRPVMRFKLASVLAKMMNLPAPQEDIVTEAAVEPQNPEA</sequence>
<feature type="chain" id="PRO_0000358984" description="Acetyl-coenzyme A carboxylase carboxyl transferase subunit beta">
    <location>
        <begin position="1"/>
        <end position="302"/>
    </location>
</feature>
<feature type="domain" description="CoA carboxyltransferase N-terminal" evidence="2">
    <location>
        <begin position="25"/>
        <end position="294"/>
    </location>
</feature>
<feature type="zinc finger region" description="C4-type" evidence="1">
    <location>
        <begin position="29"/>
        <end position="51"/>
    </location>
</feature>
<feature type="binding site" evidence="1">
    <location>
        <position position="29"/>
    </location>
    <ligand>
        <name>Zn(2+)</name>
        <dbReference type="ChEBI" id="CHEBI:29105"/>
    </ligand>
</feature>
<feature type="binding site" evidence="1">
    <location>
        <position position="32"/>
    </location>
    <ligand>
        <name>Zn(2+)</name>
        <dbReference type="ChEBI" id="CHEBI:29105"/>
    </ligand>
</feature>
<feature type="binding site" evidence="1">
    <location>
        <position position="48"/>
    </location>
    <ligand>
        <name>Zn(2+)</name>
        <dbReference type="ChEBI" id="CHEBI:29105"/>
    </ligand>
</feature>
<feature type="binding site" evidence="1">
    <location>
        <position position="51"/>
    </location>
    <ligand>
        <name>Zn(2+)</name>
        <dbReference type="ChEBI" id="CHEBI:29105"/>
    </ligand>
</feature>
<dbReference type="EC" id="2.1.3.15" evidence="1"/>
<dbReference type="EMBL" id="CU468135">
    <property type="protein sequence ID" value="CAO96219.1"/>
    <property type="molecule type" value="Genomic_DNA"/>
</dbReference>
<dbReference type="RefSeq" id="WP_012440916.1">
    <property type="nucleotide sequence ID" value="NC_010694.1"/>
</dbReference>
<dbReference type="SMR" id="B2VJ00"/>
<dbReference type="STRING" id="465817.ETA_11730"/>
<dbReference type="KEGG" id="eta:ETA_11730"/>
<dbReference type="eggNOG" id="COG0777">
    <property type="taxonomic scope" value="Bacteria"/>
</dbReference>
<dbReference type="HOGENOM" id="CLU_015486_1_0_6"/>
<dbReference type="OrthoDB" id="9772975at2"/>
<dbReference type="UniPathway" id="UPA00655">
    <property type="reaction ID" value="UER00711"/>
</dbReference>
<dbReference type="Proteomes" id="UP000001726">
    <property type="component" value="Chromosome"/>
</dbReference>
<dbReference type="GO" id="GO:0009329">
    <property type="term" value="C:acetate CoA-transferase complex"/>
    <property type="evidence" value="ECO:0007669"/>
    <property type="project" value="TreeGrafter"/>
</dbReference>
<dbReference type="GO" id="GO:0003989">
    <property type="term" value="F:acetyl-CoA carboxylase activity"/>
    <property type="evidence" value="ECO:0007669"/>
    <property type="project" value="InterPro"/>
</dbReference>
<dbReference type="GO" id="GO:0005524">
    <property type="term" value="F:ATP binding"/>
    <property type="evidence" value="ECO:0007669"/>
    <property type="project" value="UniProtKB-KW"/>
</dbReference>
<dbReference type="GO" id="GO:0016743">
    <property type="term" value="F:carboxyl- or carbamoyltransferase activity"/>
    <property type="evidence" value="ECO:0007669"/>
    <property type="project" value="UniProtKB-UniRule"/>
</dbReference>
<dbReference type="GO" id="GO:0008270">
    <property type="term" value="F:zinc ion binding"/>
    <property type="evidence" value="ECO:0007669"/>
    <property type="project" value="UniProtKB-UniRule"/>
</dbReference>
<dbReference type="GO" id="GO:0006633">
    <property type="term" value="P:fatty acid biosynthetic process"/>
    <property type="evidence" value="ECO:0007669"/>
    <property type="project" value="UniProtKB-KW"/>
</dbReference>
<dbReference type="GO" id="GO:2001295">
    <property type="term" value="P:malonyl-CoA biosynthetic process"/>
    <property type="evidence" value="ECO:0007669"/>
    <property type="project" value="UniProtKB-UniRule"/>
</dbReference>
<dbReference type="FunFam" id="3.90.226.10:FF:000013">
    <property type="entry name" value="Acetyl-coenzyme A carboxylase carboxyl transferase subunit beta"/>
    <property type="match status" value="1"/>
</dbReference>
<dbReference type="Gene3D" id="3.90.226.10">
    <property type="entry name" value="2-enoyl-CoA Hydratase, Chain A, domain 1"/>
    <property type="match status" value="1"/>
</dbReference>
<dbReference type="HAMAP" id="MF_01395">
    <property type="entry name" value="AcetylCoA_CT_beta"/>
    <property type="match status" value="1"/>
</dbReference>
<dbReference type="InterPro" id="IPR034733">
    <property type="entry name" value="AcCoA_carboxyl_beta"/>
</dbReference>
<dbReference type="InterPro" id="IPR000438">
    <property type="entry name" value="Acetyl_CoA_COase_Trfase_b_su"/>
</dbReference>
<dbReference type="InterPro" id="IPR029045">
    <property type="entry name" value="ClpP/crotonase-like_dom_sf"/>
</dbReference>
<dbReference type="InterPro" id="IPR011762">
    <property type="entry name" value="COA_CT_N"/>
</dbReference>
<dbReference type="InterPro" id="IPR041010">
    <property type="entry name" value="Znf-ACC"/>
</dbReference>
<dbReference type="NCBIfam" id="TIGR00515">
    <property type="entry name" value="accD"/>
    <property type="match status" value="1"/>
</dbReference>
<dbReference type="PANTHER" id="PTHR42995">
    <property type="entry name" value="ACETYL-COENZYME A CARBOXYLASE CARBOXYL TRANSFERASE SUBUNIT BETA, CHLOROPLASTIC"/>
    <property type="match status" value="1"/>
</dbReference>
<dbReference type="PANTHER" id="PTHR42995:SF5">
    <property type="entry name" value="ACETYL-COENZYME A CARBOXYLASE CARBOXYL TRANSFERASE SUBUNIT BETA, CHLOROPLASTIC"/>
    <property type="match status" value="1"/>
</dbReference>
<dbReference type="Pfam" id="PF01039">
    <property type="entry name" value="Carboxyl_trans"/>
    <property type="match status" value="1"/>
</dbReference>
<dbReference type="Pfam" id="PF17848">
    <property type="entry name" value="Zn_ribbon_ACC"/>
    <property type="match status" value="1"/>
</dbReference>
<dbReference type="PRINTS" id="PR01070">
    <property type="entry name" value="ACCCTRFRASEB"/>
</dbReference>
<dbReference type="SUPFAM" id="SSF52096">
    <property type="entry name" value="ClpP/crotonase"/>
    <property type="match status" value="1"/>
</dbReference>
<dbReference type="PROSITE" id="PS50980">
    <property type="entry name" value="COA_CT_NTER"/>
    <property type="match status" value="1"/>
</dbReference>
<name>ACCD_ERWT9</name>